<feature type="chain" id="PRO_0000265457" description="Small ribosomal subunit protein uS19">
    <location>
        <begin position="1"/>
        <end position="92"/>
    </location>
</feature>
<keyword id="KW-0687">Ribonucleoprotein</keyword>
<keyword id="KW-0689">Ribosomal protein</keyword>
<keyword id="KW-0694">RNA-binding</keyword>
<keyword id="KW-0699">rRNA-binding</keyword>
<gene>
    <name evidence="1" type="primary">rpsS</name>
    <name type="ordered locus">Tfu_2642</name>
</gene>
<organism>
    <name type="scientific">Thermobifida fusca (strain YX)</name>
    <dbReference type="NCBI Taxonomy" id="269800"/>
    <lineage>
        <taxon>Bacteria</taxon>
        <taxon>Bacillati</taxon>
        <taxon>Actinomycetota</taxon>
        <taxon>Actinomycetes</taxon>
        <taxon>Streptosporangiales</taxon>
        <taxon>Nocardiopsidaceae</taxon>
        <taxon>Thermobifida</taxon>
    </lineage>
</organism>
<evidence type="ECO:0000255" key="1">
    <source>
        <dbReference type="HAMAP-Rule" id="MF_00531"/>
    </source>
</evidence>
<evidence type="ECO:0000305" key="2"/>
<accession>Q47LJ7</accession>
<name>RS19_THEFY</name>
<dbReference type="EMBL" id="CP000088">
    <property type="protein sequence ID" value="AAZ56675.1"/>
    <property type="molecule type" value="Genomic_DNA"/>
</dbReference>
<dbReference type="RefSeq" id="WP_011293065.1">
    <property type="nucleotide sequence ID" value="NC_007333.1"/>
</dbReference>
<dbReference type="SMR" id="Q47LJ7"/>
<dbReference type="STRING" id="269800.Tfu_2642"/>
<dbReference type="KEGG" id="tfu:Tfu_2642"/>
<dbReference type="eggNOG" id="COG0185">
    <property type="taxonomic scope" value="Bacteria"/>
</dbReference>
<dbReference type="HOGENOM" id="CLU_144911_0_1_11"/>
<dbReference type="OrthoDB" id="9797833at2"/>
<dbReference type="GO" id="GO:0005737">
    <property type="term" value="C:cytoplasm"/>
    <property type="evidence" value="ECO:0007669"/>
    <property type="project" value="UniProtKB-ARBA"/>
</dbReference>
<dbReference type="GO" id="GO:0015935">
    <property type="term" value="C:small ribosomal subunit"/>
    <property type="evidence" value="ECO:0007669"/>
    <property type="project" value="InterPro"/>
</dbReference>
<dbReference type="GO" id="GO:0019843">
    <property type="term" value="F:rRNA binding"/>
    <property type="evidence" value="ECO:0007669"/>
    <property type="project" value="UniProtKB-UniRule"/>
</dbReference>
<dbReference type="GO" id="GO:0003735">
    <property type="term" value="F:structural constituent of ribosome"/>
    <property type="evidence" value="ECO:0007669"/>
    <property type="project" value="InterPro"/>
</dbReference>
<dbReference type="GO" id="GO:0000028">
    <property type="term" value="P:ribosomal small subunit assembly"/>
    <property type="evidence" value="ECO:0007669"/>
    <property type="project" value="TreeGrafter"/>
</dbReference>
<dbReference type="GO" id="GO:0006412">
    <property type="term" value="P:translation"/>
    <property type="evidence" value="ECO:0007669"/>
    <property type="project" value="UniProtKB-UniRule"/>
</dbReference>
<dbReference type="FunFam" id="3.30.860.10:FF:000001">
    <property type="entry name" value="30S ribosomal protein S19"/>
    <property type="match status" value="1"/>
</dbReference>
<dbReference type="Gene3D" id="3.30.860.10">
    <property type="entry name" value="30s Ribosomal Protein S19, Chain A"/>
    <property type="match status" value="1"/>
</dbReference>
<dbReference type="HAMAP" id="MF_00531">
    <property type="entry name" value="Ribosomal_uS19"/>
    <property type="match status" value="1"/>
</dbReference>
<dbReference type="InterPro" id="IPR002222">
    <property type="entry name" value="Ribosomal_uS19"/>
</dbReference>
<dbReference type="InterPro" id="IPR005732">
    <property type="entry name" value="Ribosomal_uS19_bac-type"/>
</dbReference>
<dbReference type="InterPro" id="IPR020934">
    <property type="entry name" value="Ribosomal_uS19_CS"/>
</dbReference>
<dbReference type="InterPro" id="IPR023575">
    <property type="entry name" value="Ribosomal_uS19_SF"/>
</dbReference>
<dbReference type="NCBIfam" id="TIGR01050">
    <property type="entry name" value="rpsS_bact"/>
    <property type="match status" value="1"/>
</dbReference>
<dbReference type="PANTHER" id="PTHR11880">
    <property type="entry name" value="RIBOSOMAL PROTEIN S19P FAMILY MEMBER"/>
    <property type="match status" value="1"/>
</dbReference>
<dbReference type="PANTHER" id="PTHR11880:SF8">
    <property type="entry name" value="SMALL RIBOSOMAL SUBUNIT PROTEIN US19M"/>
    <property type="match status" value="1"/>
</dbReference>
<dbReference type="Pfam" id="PF00203">
    <property type="entry name" value="Ribosomal_S19"/>
    <property type="match status" value="1"/>
</dbReference>
<dbReference type="PIRSF" id="PIRSF002144">
    <property type="entry name" value="Ribosomal_S19"/>
    <property type="match status" value="1"/>
</dbReference>
<dbReference type="PRINTS" id="PR00975">
    <property type="entry name" value="RIBOSOMALS19"/>
</dbReference>
<dbReference type="SUPFAM" id="SSF54570">
    <property type="entry name" value="Ribosomal protein S19"/>
    <property type="match status" value="1"/>
</dbReference>
<dbReference type="PROSITE" id="PS00323">
    <property type="entry name" value="RIBOSOMAL_S19"/>
    <property type="match status" value="1"/>
</dbReference>
<reference key="1">
    <citation type="journal article" date="2007" name="J. Bacteriol.">
        <title>Genome sequence and analysis of the soil cellulolytic actinomycete Thermobifida fusca YX.</title>
        <authorList>
            <person name="Lykidis A."/>
            <person name="Mavromatis K."/>
            <person name="Ivanova N."/>
            <person name="Anderson I."/>
            <person name="Land M."/>
            <person name="DiBartolo G."/>
            <person name="Martinez M."/>
            <person name="Lapidus A."/>
            <person name="Lucas S."/>
            <person name="Copeland A."/>
            <person name="Richardson P."/>
            <person name="Wilson D.B."/>
            <person name="Kyrpides N."/>
        </authorList>
    </citation>
    <scope>NUCLEOTIDE SEQUENCE [LARGE SCALE GENOMIC DNA]</scope>
    <source>
        <strain>YX</strain>
    </source>
</reference>
<proteinExistence type="inferred from homology"/>
<sequence>MPRSLKKGPFVDHHLMKKVLEQNEKGTKNVIKTWSRRSMVVPEMIGHTIAVHDGRKHVPVFITEAMIGHKLGEFAPTRTFRSHVKEDRRSRR</sequence>
<comment type="function">
    <text evidence="1">Protein S19 forms a complex with S13 that binds strongly to the 16S ribosomal RNA.</text>
</comment>
<comment type="similarity">
    <text evidence="1">Belongs to the universal ribosomal protein uS19 family.</text>
</comment>
<protein>
    <recommendedName>
        <fullName evidence="1">Small ribosomal subunit protein uS19</fullName>
    </recommendedName>
    <alternativeName>
        <fullName evidence="2">30S ribosomal protein S19</fullName>
    </alternativeName>
</protein>